<gene>
    <name evidence="1" type="primary">rplO</name>
    <name type="ordered locus">BCAN_A1237</name>
</gene>
<feature type="chain" id="PRO_1000086701" description="Large ribosomal subunit protein uL15">
    <location>
        <begin position="1"/>
        <end position="156"/>
    </location>
</feature>
<feature type="region of interest" description="Disordered" evidence="2">
    <location>
        <begin position="1"/>
        <end position="44"/>
    </location>
</feature>
<feature type="compositionally biased region" description="Basic and acidic residues" evidence="2">
    <location>
        <begin position="1"/>
        <end position="11"/>
    </location>
</feature>
<feature type="compositionally biased region" description="Gly residues" evidence="2">
    <location>
        <begin position="21"/>
        <end position="35"/>
    </location>
</feature>
<comment type="function">
    <text evidence="1">Binds to the 23S rRNA.</text>
</comment>
<comment type="subunit">
    <text evidence="1">Part of the 50S ribosomal subunit.</text>
</comment>
<comment type="similarity">
    <text evidence="1">Belongs to the universal ribosomal protein uL15 family.</text>
</comment>
<name>RL15_BRUC2</name>
<accession>A9M5N1</accession>
<organism>
    <name type="scientific">Brucella canis (strain ATCC 23365 / NCTC 10854 / RM-666)</name>
    <dbReference type="NCBI Taxonomy" id="483179"/>
    <lineage>
        <taxon>Bacteria</taxon>
        <taxon>Pseudomonadati</taxon>
        <taxon>Pseudomonadota</taxon>
        <taxon>Alphaproteobacteria</taxon>
        <taxon>Hyphomicrobiales</taxon>
        <taxon>Brucellaceae</taxon>
        <taxon>Brucella/Ochrobactrum group</taxon>
        <taxon>Brucella</taxon>
    </lineage>
</organism>
<keyword id="KW-1185">Reference proteome</keyword>
<keyword id="KW-0687">Ribonucleoprotein</keyword>
<keyword id="KW-0689">Ribosomal protein</keyword>
<keyword id="KW-0694">RNA-binding</keyword>
<keyword id="KW-0699">rRNA-binding</keyword>
<protein>
    <recommendedName>
        <fullName evidence="1">Large ribosomal subunit protein uL15</fullName>
    </recommendedName>
    <alternativeName>
        <fullName evidence="3">50S ribosomal protein L15</fullName>
    </alternativeName>
</protein>
<sequence>MKLNDLRDKPGSVKARKRVGRGIGSGTGKTGGRGVKGQKSRSGVSINGFEGGQMPIYRRLPKRGFTNIFAKSFNVVSLGRIQAAIDAGKLDAKAVVNLDSLKAAGVIRRAKDGVRILSDGELKAKVAFEVAGASKAAVEKIEKAGGSIKLPEAAAE</sequence>
<proteinExistence type="inferred from homology"/>
<reference key="1">
    <citation type="submission" date="2007-10" db="EMBL/GenBank/DDBJ databases">
        <title>Brucella canis ATCC 23365 whole genome shotgun sequencing project.</title>
        <authorList>
            <person name="Setubal J.C."/>
            <person name="Bowns C."/>
            <person name="Boyle S."/>
            <person name="Crasta O.R."/>
            <person name="Czar M.J."/>
            <person name="Dharmanolla C."/>
            <person name="Gillespie J.J."/>
            <person name="Kenyon R.W."/>
            <person name="Lu J."/>
            <person name="Mane S."/>
            <person name="Mohapatra S."/>
            <person name="Nagrani S."/>
            <person name="Purkayastha A."/>
            <person name="Rajasimha H.K."/>
            <person name="Shallom J.M."/>
            <person name="Shallom S."/>
            <person name="Shukla M."/>
            <person name="Snyder E.E."/>
            <person name="Sobral B.W."/>
            <person name="Wattam A.R."/>
            <person name="Will R."/>
            <person name="Williams K."/>
            <person name="Yoo H."/>
            <person name="Bruce D."/>
            <person name="Detter C."/>
            <person name="Munk C."/>
            <person name="Brettin T.S."/>
        </authorList>
    </citation>
    <scope>NUCLEOTIDE SEQUENCE [LARGE SCALE GENOMIC DNA]</scope>
    <source>
        <strain>ATCC 23365 / NCTC 10854 / RM-666</strain>
    </source>
</reference>
<dbReference type="EMBL" id="CP000872">
    <property type="protein sequence ID" value="ABX62286.1"/>
    <property type="molecule type" value="Genomic_DNA"/>
</dbReference>
<dbReference type="RefSeq" id="WP_002964343.1">
    <property type="nucleotide sequence ID" value="NC_010103.1"/>
</dbReference>
<dbReference type="SMR" id="A9M5N1"/>
<dbReference type="GeneID" id="97533543"/>
<dbReference type="KEGG" id="bcs:BCAN_A1237"/>
<dbReference type="HOGENOM" id="CLU_055188_4_0_5"/>
<dbReference type="PhylomeDB" id="A9M5N1"/>
<dbReference type="Proteomes" id="UP000001385">
    <property type="component" value="Chromosome I"/>
</dbReference>
<dbReference type="GO" id="GO:0022625">
    <property type="term" value="C:cytosolic large ribosomal subunit"/>
    <property type="evidence" value="ECO:0007669"/>
    <property type="project" value="TreeGrafter"/>
</dbReference>
<dbReference type="GO" id="GO:0019843">
    <property type="term" value="F:rRNA binding"/>
    <property type="evidence" value="ECO:0007669"/>
    <property type="project" value="UniProtKB-UniRule"/>
</dbReference>
<dbReference type="GO" id="GO:0003735">
    <property type="term" value="F:structural constituent of ribosome"/>
    <property type="evidence" value="ECO:0007669"/>
    <property type="project" value="InterPro"/>
</dbReference>
<dbReference type="GO" id="GO:0006412">
    <property type="term" value="P:translation"/>
    <property type="evidence" value="ECO:0007669"/>
    <property type="project" value="UniProtKB-UniRule"/>
</dbReference>
<dbReference type="Gene3D" id="3.100.10.10">
    <property type="match status" value="1"/>
</dbReference>
<dbReference type="HAMAP" id="MF_01341">
    <property type="entry name" value="Ribosomal_uL15"/>
    <property type="match status" value="1"/>
</dbReference>
<dbReference type="InterPro" id="IPR030878">
    <property type="entry name" value="Ribosomal_uL15"/>
</dbReference>
<dbReference type="InterPro" id="IPR021131">
    <property type="entry name" value="Ribosomal_uL15/eL18"/>
</dbReference>
<dbReference type="InterPro" id="IPR036227">
    <property type="entry name" value="Ribosomal_uL15/eL18_sf"/>
</dbReference>
<dbReference type="InterPro" id="IPR005749">
    <property type="entry name" value="Ribosomal_uL15_bac-type"/>
</dbReference>
<dbReference type="InterPro" id="IPR001196">
    <property type="entry name" value="Ribosomal_uL15_CS"/>
</dbReference>
<dbReference type="NCBIfam" id="TIGR01071">
    <property type="entry name" value="rplO_bact"/>
    <property type="match status" value="1"/>
</dbReference>
<dbReference type="PANTHER" id="PTHR12934">
    <property type="entry name" value="50S RIBOSOMAL PROTEIN L15"/>
    <property type="match status" value="1"/>
</dbReference>
<dbReference type="PANTHER" id="PTHR12934:SF11">
    <property type="entry name" value="LARGE RIBOSOMAL SUBUNIT PROTEIN UL15M"/>
    <property type="match status" value="1"/>
</dbReference>
<dbReference type="Pfam" id="PF00828">
    <property type="entry name" value="Ribosomal_L27A"/>
    <property type="match status" value="1"/>
</dbReference>
<dbReference type="SUPFAM" id="SSF52080">
    <property type="entry name" value="Ribosomal proteins L15p and L18e"/>
    <property type="match status" value="1"/>
</dbReference>
<dbReference type="PROSITE" id="PS00475">
    <property type="entry name" value="RIBOSOMAL_L15"/>
    <property type="match status" value="1"/>
</dbReference>
<evidence type="ECO:0000255" key="1">
    <source>
        <dbReference type="HAMAP-Rule" id="MF_01341"/>
    </source>
</evidence>
<evidence type="ECO:0000256" key="2">
    <source>
        <dbReference type="SAM" id="MobiDB-lite"/>
    </source>
</evidence>
<evidence type="ECO:0000305" key="3"/>